<gene>
    <name evidence="1" type="primary">gltX</name>
    <name type="ordered locus">Igni_1110</name>
</gene>
<accession>A8ABI5</accession>
<proteinExistence type="inferred from homology"/>
<reference key="1">
    <citation type="journal article" date="2008" name="Genome Biol.">
        <title>A genomic analysis of the archaeal system Ignicoccus hospitalis-Nanoarchaeum equitans.</title>
        <authorList>
            <person name="Podar M."/>
            <person name="Anderson I."/>
            <person name="Makarova K.S."/>
            <person name="Elkins J.G."/>
            <person name="Ivanova N."/>
            <person name="Wall M.A."/>
            <person name="Lykidis A."/>
            <person name="Mavromatis K."/>
            <person name="Sun H."/>
            <person name="Hudson M.E."/>
            <person name="Chen W."/>
            <person name="Deciu C."/>
            <person name="Hutchison D."/>
            <person name="Eads J.R."/>
            <person name="Anderson A."/>
            <person name="Fernandes F."/>
            <person name="Szeto E."/>
            <person name="Lapidus A."/>
            <person name="Kyrpides N.C."/>
            <person name="Saier M.H. Jr."/>
            <person name="Richardson P.M."/>
            <person name="Rachel R."/>
            <person name="Huber H."/>
            <person name="Eisen J.A."/>
            <person name="Koonin E.V."/>
            <person name="Keller M."/>
            <person name="Stetter K.O."/>
        </authorList>
    </citation>
    <scope>NUCLEOTIDE SEQUENCE [LARGE SCALE GENOMIC DNA]</scope>
    <source>
        <strain>KIN4/I / DSM 18386 / JCM 14125</strain>
    </source>
</reference>
<organism>
    <name type="scientific">Ignicoccus hospitalis (strain KIN4/I / DSM 18386 / JCM 14125)</name>
    <dbReference type="NCBI Taxonomy" id="453591"/>
    <lineage>
        <taxon>Archaea</taxon>
        <taxon>Thermoproteota</taxon>
        <taxon>Thermoprotei</taxon>
        <taxon>Desulfurococcales</taxon>
        <taxon>Desulfurococcaceae</taxon>
        <taxon>Ignicoccus</taxon>
    </lineage>
</organism>
<comment type="function">
    <text evidence="1">Catalyzes the attachment of glutamate to tRNA(Glu) in a two-step reaction: glutamate is first activated by ATP to form Glu-AMP and then transferred to the acceptor end of tRNA(Glu).</text>
</comment>
<comment type="catalytic activity">
    <reaction evidence="1">
        <text>tRNA(Glu) + L-glutamate + ATP = L-glutamyl-tRNA(Glu) + AMP + diphosphate</text>
        <dbReference type="Rhea" id="RHEA:23540"/>
        <dbReference type="Rhea" id="RHEA-COMP:9663"/>
        <dbReference type="Rhea" id="RHEA-COMP:9680"/>
        <dbReference type="ChEBI" id="CHEBI:29985"/>
        <dbReference type="ChEBI" id="CHEBI:30616"/>
        <dbReference type="ChEBI" id="CHEBI:33019"/>
        <dbReference type="ChEBI" id="CHEBI:78442"/>
        <dbReference type="ChEBI" id="CHEBI:78520"/>
        <dbReference type="ChEBI" id="CHEBI:456215"/>
        <dbReference type="EC" id="6.1.1.17"/>
    </reaction>
</comment>
<comment type="subcellular location">
    <subcellularLocation>
        <location evidence="1">Cytoplasm</location>
    </subcellularLocation>
</comment>
<comment type="similarity">
    <text evidence="1">Belongs to the class-I aminoacyl-tRNA synthetase family. Glutamate--tRNA ligase type 2 subfamily.</text>
</comment>
<protein>
    <recommendedName>
        <fullName evidence="1">Glutamate--tRNA ligase</fullName>
        <ecNumber evidence="1">6.1.1.17</ecNumber>
    </recommendedName>
    <alternativeName>
        <fullName evidence="1">Glutamyl-tRNA synthetase</fullName>
        <shortName evidence="1">GluRS</shortName>
    </alternativeName>
</protein>
<feature type="chain" id="PRO_1000070998" description="Glutamate--tRNA ligase">
    <location>
        <begin position="1"/>
        <end position="562"/>
    </location>
</feature>
<feature type="short sequence motif" description="'HIGH' region" evidence="1">
    <location>
        <begin position="104"/>
        <end position="114"/>
    </location>
</feature>
<evidence type="ECO:0000255" key="1">
    <source>
        <dbReference type="HAMAP-Rule" id="MF_02076"/>
    </source>
</evidence>
<sequence>MDVRELALKHALRNAYLHGGKAQLKPVVTAVLAESPELRPKVKEIIPIIKEVVEEVNRMSLEEQERILKERFPEALEERKKETRKGLPPLPNAERGKVKTRFAPNPDFYMTLGNARPAIISYEYAKAYEGRFVLRFEDTDPRTKRPLPEAYEAIKEDLSWLGIGWDEEYYQSQRMEVYYGLLRELVRRGGAYVCTCPPEEWRKLRDEGKPCPHRDLPPEEQEELLDQVLEGKFGEGEAVVRVKTDLRHPDPSVRDWVAFRIIDTSKHPHPLTGDKYVLWPTYNFAAGVDDYLMGITHVLRAREHRQNTVKQEFLYKHLGWTMPTVIHFGRLKLEGFVLSKSKMREAGFKGDDPRAATIRGLRRRGFAPEAIREVMLSVGIKSSDASISFANLAAENKKVIDKKAYRVMAVEDPAPAKLLAPEPLEAELPWHPTEGLGSRKYSVEPGEVVYLERADLRRAKRRGGLRLMELANFKYKGFDEDEGVYLLEFESKELDKEKGYDIVQWVKDPKGAIVWRPGERKSFALVEPEALKLEGWVQLIRKGYAKVDGVEEDTLNLIYLHE</sequence>
<dbReference type="EC" id="6.1.1.17" evidence="1"/>
<dbReference type="EMBL" id="CP000816">
    <property type="protein sequence ID" value="ABU82287.1"/>
    <property type="molecule type" value="Genomic_DNA"/>
</dbReference>
<dbReference type="RefSeq" id="WP_012123251.1">
    <property type="nucleotide sequence ID" value="NC_009776.1"/>
</dbReference>
<dbReference type="SMR" id="A8ABI5"/>
<dbReference type="STRING" id="453591.Igni_1110"/>
<dbReference type="GeneID" id="5562106"/>
<dbReference type="KEGG" id="iho:Igni_1110"/>
<dbReference type="eggNOG" id="arCOG04302">
    <property type="taxonomic scope" value="Archaea"/>
</dbReference>
<dbReference type="HOGENOM" id="CLU_001882_1_3_2"/>
<dbReference type="OrthoDB" id="10470at2157"/>
<dbReference type="PhylomeDB" id="A8ABI5"/>
<dbReference type="Proteomes" id="UP000000262">
    <property type="component" value="Chromosome"/>
</dbReference>
<dbReference type="GO" id="GO:0005829">
    <property type="term" value="C:cytosol"/>
    <property type="evidence" value="ECO:0007669"/>
    <property type="project" value="TreeGrafter"/>
</dbReference>
<dbReference type="GO" id="GO:0005524">
    <property type="term" value="F:ATP binding"/>
    <property type="evidence" value="ECO:0007669"/>
    <property type="project" value="UniProtKB-UniRule"/>
</dbReference>
<dbReference type="GO" id="GO:0004818">
    <property type="term" value="F:glutamate-tRNA ligase activity"/>
    <property type="evidence" value="ECO:0007669"/>
    <property type="project" value="UniProtKB-UniRule"/>
</dbReference>
<dbReference type="GO" id="GO:0043604">
    <property type="term" value="P:amide biosynthetic process"/>
    <property type="evidence" value="ECO:0007669"/>
    <property type="project" value="TreeGrafter"/>
</dbReference>
<dbReference type="GO" id="GO:0006424">
    <property type="term" value="P:glutamyl-tRNA aminoacylation"/>
    <property type="evidence" value="ECO:0007669"/>
    <property type="project" value="UniProtKB-UniRule"/>
</dbReference>
<dbReference type="Gene3D" id="3.40.50.620">
    <property type="entry name" value="HUPs"/>
    <property type="match status" value="1"/>
</dbReference>
<dbReference type="Gene3D" id="2.40.240.10">
    <property type="entry name" value="Ribosomal Protein L25, Chain P"/>
    <property type="match status" value="1"/>
</dbReference>
<dbReference type="HAMAP" id="MF_02076">
    <property type="entry name" value="Glu_tRNA_synth_type2"/>
    <property type="match status" value="1"/>
</dbReference>
<dbReference type="InterPro" id="IPR050132">
    <property type="entry name" value="Gln/Glu-tRNA_Ligase"/>
</dbReference>
<dbReference type="InterPro" id="IPR004526">
    <property type="entry name" value="Glu-tRNA-synth_arc/euk"/>
</dbReference>
<dbReference type="InterPro" id="IPR000924">
    <property type="entry name" value="Glu/Gln-tRNA-synth"/>
</dbReference>
<dbReference type="InterPro" id="IPR020058">
    <property type="entry name" value="Glu/Gln-tRNA-synth_Ib_cat-dom"/>
</dbReference>
<dbReference type="InterPro" id="IPR020059">
    <property type="entry name" value="Glu/Gln-tRNA-synth_Ib_codon-bd"/>
</dbReference>
<dbReference type="InterPro" id="IPR020056">
    <property type="entry name" value="Rbsml_bL25/Gln-tRNA_synth_N"/>
</dbReference>
<dbReference type="InterPro" id="IPR011035">
    <property type="entry name" value="Ribosomal_bL25/Gln-tRNA_synth"/>
</dbReference>
<dbReference type="InterPro" id="IPR014729">
    <property type="entry name" value="Rossmann-like_a/b/a_fold"/>
</dbReference>
<dbReference type="NCBIfam" id="TIGR00463">
    <property type="entry name" value="gltX_arch"/>
    <property type="match status" value="1"/>
</dbReference>
<dbReference type="NCBIfam" id="NF003169">
    <property type="entry name" value="PRK04156.1"/>
    <property type="match status" value="1"/>
</dbReference>
<dbReference type="PANTHER" id="PTHR43097:SF5">
    <property type="entry name" value="GLUTAMATE--TRNA LIGASE"/>
    <property type="match status" value="1"/>
</dbReference>
<dbReference type="PANTHER" id="PTHR43097">
    <property type="entry name" value="GLUTAMINE-TRNA LIGASE"/>
    <property type="match status" value="1"/>
</dbReference>
<dbReference type="Pfam" id="PF00749">
    <property type="entry name" value="tRNA-synt_1c"/>
    <property type="match status" value="1"/>
</dbReference>
<dbReference type="Pfam" id="PF03950">
    <property type="entry name" value="tRNA-synt_1c_C"/>
    <property type="match status" value="1"/>
</dbReference>
<dbReference type="PRINTS" id="PR00987">
    <property type="entry name" value="TRNASYNTHGLU"/>
</dbReference>
<dbReference type="SUPFAM" id="SSF52374">
    <property type="entry name" value="Nucleotidylyl transferase"/>
    <property type="match status" value="1"/>
</dbReference>
<dbReference type="SUPFAM" id="SSF50715">
    <property type="entry name" value="Ribosomal protein L25-like"/>
    <property type="match status" value="1"/>
</dbReference>
<keyword id="KW-0030">Aminoacyl-tRNA synthetase</keyword>
<keyword id="KW-0067">ATP-binding</keyword>
<keyword id="KW-0963">Cytoplasm</keyword>
<keyword id="KW-0436">Ligase</keyword>
<keyword id="KW-0547">Nucleotide-binding</keyword>
<keyword id="KW-0648">Protein biosynthesis</keyword>
<keyword id="KW-1185">Reference proteome</keyword>
<name>SYE_IGNH4</name>